<reference key="1">
    <citation type="journal article" date="1992" name="Int. J. Pept. Protein Res.">
        <title>Isolation and characterization of glycosylated and non-glycosylated prolactins from alligator and crocodile.</title>
        <authorList>
            <person name="Noso T."/>
            <person name="Swanson P."/>
            <person name="Lance V.A."/>
            <person name="Kawauchi H."/>
        </authorList>
    </citation>
    <scope>PROTEIN SEQUENCE</scope>
    <source>
        <tissue>Pituitary</tissue>
    </source>
</reference>
<evidence type="ECO:0000250" key="1"/>
<evidence type="ECO:0000305" key="2"/>
<protein>
    <recommendedName>
        <fullName>Prolactin-1</fullName>
    </recommendedName>
    <alternativeName>
        <fullName>Prolactin I</fullName>
        <shortName>PRL-I</shortName>
    </alternativeName>
</protein>
<organism>
    <name type="scientific">Crocodylus novaeguineae</name>
    <name type="common">Crocodile</name>
    <dbReference type="NCBI Taxonomy" id="8503"/>
    <lineage>
        <taxon>Eukaryota</taxon>
        <taxon>Metazoa</taxon>
        <taxon>Chordata</taxon>
        <taxon>Craniata</taxon>
        <taxon>Vertebrata</taxon>
        <taxon>Euteleostomi</taxon>
        <taxon>Archelosauria</taxon>
        <taxon>Archosauria</taxon>
        <taxon>Crocodylia</taxon>
        <taxon>Longirostres</taxon>
        <taxon>Crocodylidae</taxon>
        <taxon>Crocodylus</taxon>
    </lineage>
</organism>
<sequence>LPICPSGSVNCQVSLGELFDRAVKLSHYIHFLSSEMFNEFDERYAQGRGFITKAVNGCHNASLTTPEDKEQAQQIHHEDLLNLVLGVLRSWNDPLLHLVTEVQRIKEAPDTILWKAVEIEEQNKRLLEGMEKIIGRVQPGDTGNEVYSRWSGLPSLQLADEDSRLFAFYNLLHCGRRDSHKIDNYLKLLKCRLIHDSNC</sequence>
<keyword id="KW-0903">Direct protein sequencing</keyword>
<keyword id="KW-1015">Disulfide bond</keyword>
<keyword id="KW-0325">Glycoprotein</keyword>
<keyword id="KW-0372">Hormone</keyword>
<keyword id="KW-0964">Secreted</keyword>
<dbReference type="SMR" id="P55753"/>
<dbReference type="GO" id="GO:0005615">
    <property type="term" value="C:extracellular space"/>
    <property type="evidence" value="ECO:0007669"/>
    <property type="project" value="TreeGrafter"/>
</dbReference>
<dbReference type="GO" id="GO:0005179">
    <property type="term" value="F:hormone activity"/>
    <property type="evidence" value="ECO:0007669"/>
    <property type="project" value="UniProtKB-KW"/>
</dbReference>
<dbReference type="GO" id="GO:0008284">
    <property type="term" value="P:positive regulation of cell population proliferation"/>
    <property type="evidence" value="ECO:0007669"/>
    <property type="project" value="TreeGrafter"/>
</dbReference>
<dbReference type="GO" id="GO:0046427">
    <property type="term" value="P:positive regulation of receptor signaling pathway via JAK-STAT"/>
    <property type="evidence" value="ECO:0007669"/>
    <property type="project" value="TreeGrafter"/>
</dbReference>
<dbReference type="GO" id="GO:0031667">
    <property type="term" value="P:response to nutrient levels"/>
    <property type="evidence" value="ECO:0007669"/>
    <property type="project" value="TreeGrafter"/>
</dbReference>
<dbReference type="CDD" id="cd10288">
    <property type="entry name" value="prolactin_like"/>
    <property type="match status" value="1"/>
</dbReference>
<dbReference type="FunFam" id="1.20.1250.10:FF:000003">
    <property type="entry name" value="Prolactin"/>
    <property type="match status" value="1"/>
</dbReference>
<dbReference type="Gene3D" id="1.20.1250.10">
    <property type="match status" value="1"/>
</dbReference>
<dbReference type="InterPro" id="IPR009079">
    <property type="entry name" value="4_helix_cytokine-like_core"/>
</dbReference>
<dbReference type="InterPro" id="IPR001400">
    <property type="entry name" value="Somatotropin/Prolactin"/>
</dbReference>
<dbReference type="InterPro" id="IPR018116">
    <property type="entry name" value="Somatotropin_CS"/>
</dbReference>
<dbReference type="PANTHER" id="PTHR11417:SF5">
    <property type="entry name" value="PROLACTIN"/>
    <property type="match status" value="1"/>
</dbReference>
<dbReference type="PANTHER" id="PTHR11417">
    <property type="entry name" value="SOMATOTROPIN,PROLACTIN"/>
    <property type="match status" value="1"/>
</dbReference>
<dbReference type="Pfam" id="PF00103">
    <property type="entry name" value="Hormone_1"/>
    <property type="match status" value="1"/>
</dbReference>
<dbReference type="PRINTS" id="PR00836">
    <property type="entry name" value="SOMATOTROPIN"/>
</dbReference>
<dbReference type="SUPFAM" id="SSF47266">
    <property type="entry name" value="4-helical cytokines"/>
    <property type="match status" value="1"/>
</dbReference>
<dbReference type="PROSITE" id="PS00266">
    <property type="entry name" value="SOMATOTROPIN_1"/>
    <property type="match status" value="1"/>
</dbReference>
<accession>P55753</accession>
<feature type="chain" id="PRO_0000181324" description="Prolactin-1">
    <location>
        <begin position="1"/>
        <end position="199"/>
    </location>
</feature>
<feature type="glycosylation site" description="N-linked (GlcNAc...) asparagine">
    <location>
        <position position="60"/>
    </location>
</feature>
<feature type="disulfide bond" evidence="1">
    <location>
        <begin position="4"/>
        <end position="11"/>
    </location>
</feature>
<feature type="disulfide bond" evidence="1">
    <location>
        <begin position="58"/>
        <end position="174"/>
    </location>
</feature>
<feature type="disulfide bond" evidence="1">
    <location>
        <begin position="191"/>
        <end position="199"/>
    </location>
</feature>
<proteinExistence type="evidence at protein level"/>
<name>PRL1_CRONO</name>
<comment type="subcellular location">
    <subcellularLocation>
        <location>Secreted</location>
    </subcellularLocation>
</comment>
<comment type="PTM">
    <text>Glycosylated.</text>
</comment>
<comment type="similarity">
    <text evidence="2">Belongs to the somatotropin/prolactin family.</text>
</comment>